<protein>
    <recommendedName>
        <fullName evidence="1">Imidazoleglycerol-phosphate dehydratase</fullName>
        <shortName evidence="1">IGPD</shortName>
        <ecNumber evidence="1">4.2.1.19</ecNumber>
    </recommendedName>
</protein>
<feature type="chain" id="PRO_0000336301" description="Imidazoleglycerol-phosphate dehydratase">
    <location>
        <begin position="1"/>
        <end position="196"/>
    </location>
</feature>
<evidence type="ECO:0000255" key="1">
    <source>
        <dbReference type="HAMAP-Rule" id="MF_00076"/>
    </source>
</evidence>
<organism>
    <name type="scientific">Chlorobium chlorochromatii (strain CaD3)</name>
    <dbReference type="NCBI Taxonomy" id="340177"/>
    <lineage>
        <taxon>Bacteria</taxon>
        <taxon>Pseudomonadati</taxon>
        <taxon>Chlorobiota</taxon>
        <taxon>Chlorobiia</taxon>
        <taxon>Chlorobiales</taxon>
        <taxon>Chlorobiaceae</taxon>
        <taxon>Chlorobium/Pelodictyon group</taxon>
        <taxon>Chlorobium</taxon>
    </lineage>
</organism>
<dbReference type="EC" id="4.2.1.19" evidence="1"/>
<dbReference type="EMBL" id="CP000108">
    <property type="protein sequence ID" value="ABB28788.1"/>
    <property type="molecule type" value="Genomic_DNA"/>
</dbReference>
<dbReference type="SMR" id="Q3AQD7"/>
<dbReference type="STRING" id="340177.Cag_1533"/>
<dbReference type="KEGG" id="cch:Cag_1533"/>
<dbReference type="eggNOG" id="COG0131">
    <property type="taxonomic scope" value="Bacteria"/>
</dbReference>
<dbReference type="HOGENOM" id="CLU_044308_3_0_10"/>
<dbReference type="OrthoDB" id="9790411at2"/>
<dbReference type="UniPathway" id="UPA00031">
    <property type="reaction ID" value="UER00011"/>
</dbReference>
<dbReference type="GO" id="GO:0005737">
    <property type="term" value="C:cytoplasm"/>
    <property type="evidence" value="ECO:0007669"/>
    <property type="project" value="UniProtKB-SubCell"/>
</dbReference>
<dbReference type="GO" id="GO:0004424">
    <property type="term" value="F:imidazoleglycerol-phosphate dehydratase activity"/>
    <property type="evidence" value="ECO:0007669"/>
    <property type="project" value="UniProtKB-UniRule"/>
</dbReference>
<dbReference type="GO" id="GO:0000105">
    <property type="term" value="P:L-histidine biosynthetic process"/>
    <property type="evidence" value="ECO:0007669"/>
    <property type="project" value="UniProtKB-UniRule"/>
</dbReference>
<dbReference type="CDD" id="cd07914">
    <property type="entry name" value="IGPD"/>
    <property type="match status" value="1"/>
</dbReference>
<dbReference type="FunFam" id="3.30.230.40:FF:000001">
    <property type="entry name" value="Imidazoleglycerol-phosphate dehydratase HisB"/>
    <property type="match status" value="1"/>
</dbReference>
<dbReference type="FunFam" id="3.30.230.40:FF:000003">
    <property type="entry name" value="Imidazoleglycerol-phosphate dehydratase HisB"/>
    <property type="match status" value="1"/>
</dbReference>
<dbReference type="Gene3D" id="3.30.230.40">
    <property type="entry name" value="Imidazole glycerol phosphate dehydratase, domain 1"/>
    <property type="match status" value="2"/>
</dbReference>
<dbReference type="HAMAP" id="MF_00076">
    <property type="entry name" value="HisB"/>
    <property type="match status" value="1"/>
</dbReference>
<dbReference type="InterPro" id="IPR038494">
    <property type="entry name" value="IGPD_sf"/>
</dbReference>
<dbReference type="InterPro" id="IPR000807">
    <property type="entry name" value="ImidazoleglycerolP_deHydtase"/>
</dbReference>
<dbReference type="InterPro" id="IPR020565">
    <property type="entry name" value="ImidazoleglycerP_deHydtase_CS"/>
</dbReference>
<dbReference type="InterPro" id="IPR020568">
    <property type="entry name" value="Ribosomal_Su5_D2-typ_SF"/>
</dbReference>
<dbReference type="NCBIfam" id="NF002111">
    <property type="entry name" value="PRK00951.2-1"/>
    <property type="match status" value="1"/>
</dbReference>
<dbReference type="NCBIfam" id="NF002114">
    <property type="entry name" value="PRK00951.2-4"/>
    <property type="match status" value="1"/>
</dbReference>
<dbReference type="PANTHER" id="PTHR23133:SF2">
    <property type="entry name" value="IMIDAZOLEGLYCEROL-PHOSPHATE DEHYDRATASE"/>
    <property type="match status" value="1"/>
</dbReference>
<dbReference type="PANTHER" id="PTHR23133">
    <property type="entry name" value="IMIDAZOLEGLYCEROL-PHOSPHATE DEHYDRATASE HIS7"/>
    <property type="match status" value="1"/>
</dbReference>
<dbReference type="Pfam" id="PF00475">
    <property type="entry name" value="IGPD"/>
    <property type="match status" value="1"/>
</dbReference>
<dbReference type="SUPFAM" id="SSF54211">
    <property type="entry name" value="Ribosomal protein S5 domain 2-like"/>
    <property type="match status" value="2"/>
</dbReference>
<dbReference type="PROSITE" id="PS00954">
    <property type="entry name" value="IGP_DEHYDRATASE_1"/>
    <property type="match status" value="1"/>
</dbReference>
<dbReference type="PROSITE" id="PS00955">
    <property type="entry name" value="IGP_DEHYDRATASE_2"/>
    <property type="match status" value="1"/>
</dbReference>
<comment type="catalytic activity">
    <reaction evidence="1">
        <text>D-erythro-1-(imidazol-4-yl)glycerol 3-phosphate = 3-(imidazol-4-yl)-2-oxopropyl phosphate + H2O</text>
        <dbReference type="Rhea" id="RHEA:11040"/>
        <dbReference type="ChEBI" id="CHEBI:15377"/>
        <dbReference type="ChEBI" id="CHEBI:57766"/>
        <dbReference type="ChEBI" id="CHEBI:58278"/>
        <dbReference type="EC" id="4.2.1.19"/>
    </reaction>
</comment>
<comment type="pathway">
    <text evidence="1">Amino-acid biosynthesis; L-histidine biosynthesis; L-histidine from 5-phospho-alpha-D-ribose 1-diphosphate: step 6/9.</text>
</comment>
<comment type="subcellular location">
    <subcellularLocation>
        <location evidence="1">Cytoplasm</location>
    </subcellularLocation>
</comment>
<comment type="similarity">
    <text evidence="1">Belongs to the imidazoleglycerol-phosphate dehydratase family.</text>
</comment>
<keyword id="KW-0028">Amino-acid biosynthesis</keyword>
<keyword id="KW-0963">Cytoplasm</keyword>
<keyword id="KW-0368">Histidine biosynthesis</keyword>
<keyword id="KW-0456">Lyase</keyword>
<gene>
    <name evidence="1" type="primary">hisB</name>
    <name type="ordered locus">Cag_1533</name>
</gene>
<name>HIS7_CHLCH</name>
<accession>Q3AQD7</accession>
<proteinExistence type="inferred from homology"/>
<sequence length="196" mass="21285">MAEQARTATVKRTTKETDITVTLTLDGNGTSAIASGVVFLDHMLTNFCKHAGFNLTLRCNGDLDVDDHHSVEDVALVLGTAITEALGNKSGIQRYGWAIIPMDEALARCAVDLGGRSYCVFKAEFRRPVIQGLSTEMVEHFFRSLADTMKATLHLEVLDGNNTHHKIEALFKAFAYAMKAAVSITGNDIPSTKGLI</sequence>
<reference key="1">
    <citation type="submission" date="2005-08" db="EMBL/GenBank/DDBJ databases">
        <title>Complete sequence of Chlorobium chlorochromatii CaD3.</title>
        <authorList>
            <consortium name="US DOE Joint Genome Institute"/>
            <person name="Copeland A."/>
            <person name="Lucas S."/>
            <person name="Lapidus A."/>
            <person name="Barry K."/>
            <person name="Detter J.C."/>
            <person name="Glavina T."/>
            <person name="Hammon N."/>
            <person name="Israni S."/>
            <person name="Pitluck S."/>
            <person name="Bryant D."/>
            <person name="Schmutz J."/>
            <person name="Larimer F."/>
            <person name="Land M."/>
            <person name="Kyrpides N."/>
            <person name="Ivanova N."/>
            <person name="Richardson P."/>
        </authorList>
    </citation>
    <scope>NUCLEOTIDE SEQUENCE [LARGE SCALE GENOMIC DNA]</scope>
    <source>
        <strain>CaD3</strain>
    </source>
</reference>